<protein>
    <recommendedName>
        <fullName evidence="1">DNA ligase 1</fullName>
        <ecNumber evidence="1">6.5.1.1</ecNumber>
    </recommendedName>
    <alternativeName>
        <fullName evidence="1">Polydeoxyribonucleotide synthase [ATP] 1</fullName>
    </alternativeName>
</protein>
<accession>Q46C04</accession>
<dbReference type="EC" id="6.5.1.1" evidence="1"/>
<dbReference type="EMBL" id="CP000099">
    <property type="protein sequence ID" value="AAZ70588.1"/>
    <property type="molecule type" value="Genomic_DNA"/>
</dbReference>
<dbReference type="SMR" id="Q46C04"/>
<dbReference type="STRING" id="269797.Mbar_A1643"/>
<dbReference type="PaxDb" id="269797-Mbar_A1643"/>
<dbReference type="KEGG" id="mba:Mbar_A1643"/>
<dbReference type="eggNOG" id="arCOG01347">
    <property type="taxonomic scope" value="Archaea"/>
</dbReference>
<dbReference type="HOGENOM" id="CLU_005138_6_0_2"/>
<dbReference type="OrthoDB" id="31274at2157"/>
<dbReference type="GO" id="GO:0005524">
    <property type="term" value="F:ATP binding"/>
    <property type="evidence" value="ECO:0007669"/>
    <property type="project" value="UniProtKB-UniRule"/>
</dbReference>
<dbReference type="GO" id="GO:0003677">
    <property type="term" value="F:DNA binding"/>
    <property type="evidence" value="ECO:0007669"/>
    <property type="project" value="InterPro"/>
</dbReference>
<dbReference type="GO" id="GO:0003910">
    <property type="term" value="F:DNA ligase (ATP) activity"/>
    <property type="evidence" value="ECO:0007669"/>
    <property type="project" value="UniProtKB-UniRule"/>
</dbReference>
<dbReference type="GO" id="GO:0046872">
    <property type="term" value="F:metal ion binding"/>
    <property type="evidence" value="ECO:0007669"/>
    <property type="project" value="UniProtKB-KW"/>
</dbReference>
<dbReference type="GO" id="GO:0051301">
    <property type="term" value="P:cell division"/>
    <property type="evidence" value="ECO:0007669"/>
    <property type="project" value="UniProtKB-KW"/>
</dbReference>
<dbReference type="GO" id="GO:0071897">
    <property type="term" value="P:DNA biosynthetic process"/>
    <property type="evidence" value="ECO:0007669"/>
    <property type="project" value="InterPro"/>
</dbReference>
<dbReference type="GO" id="GO:0006310">
    <property type="term" value="P:DNA recombination"/>
    <property type="evidence" value="ECO:0007669"/>
    <property type="project" value="UniProtKB-UniRule"/>
</dbReference>
<dbReference type="GO" id="GO:0006281">
    <property type="term" value="P:DNA repair"/>
    <property type="evidence" value="ECO:0007669"/>
    <property type="project" value="UniProtKB-UniRule"/>
</dbReference>
<dbReference type="GO" id="GO:0006273">
    <property type="term" value="P:lagging strand elongation"/>
    <property type="evidence" value="ECO:0007669"/>
    <property type="project" value="TreeGrafter"/>
</dbReference>
<dbReference type="CDD" id="cd07901">
    <property type="entry name" value="Adenylation_DNA_ligase_Arch_LigB"/>
    <property type="match status" value="1"/>
</dbReference>
<dbReference type="FunFam" id="3.30.470.30:FF:000012">
    <property type="entry name" value="Probable DNA ligase"/>
    <property type="match status" value="1"/>
</dbReference>
<dbReference type="Gene3D" id="1.10.3260.10">
    <property type="entry name" value="DNA ligase, ATP-dependent, N-terminal domain"/>
    <property type="match status" value="1"/>
</dbReference>
<dbReference type="Gene3D" id="3.30.470.30">
    <property type="entry name" value="DNA ligase/mRNA capping enzyme"/>
    <property type="match status" value="1"/>
</dbReference>
<dbReference type="Gene3D" id="2.40.50.140">
    <property type="entry name" value="Nucleic acid-binding proteins"/>
    <property type="match status" value="1"/>
</dbReference>
<dbReference type="HAMAP" id="MF_00407">
    <property type="entry name" value="DNA_ligase"/>
    <property type="match status" value="1"/>
</dbReference>
<dbReference type="InterPro" id="IPR050191">
    <property type="entry name" value="ATP-dep_DNA_ligase"/>
</dbReference>
<dbReference type="InterPro" id="IPR022865">
    <property type="entry name" value="DNA_ligae_ATP-dep_bac/arc"/>
</dbReference>
<dbReference type="InterPro" id="IPR000977">
    <property type="entry name" value="DNA_ligase_ATP-dep"/>
</dbReference>
<dbReference type="InterPro" id="IPR012309">
    <property type="entry name" value="DNA_ligase_ATP-dep_C"/>
</dbReference>
<dbReference type="InterPro" id="IPR012310">
    <property type="entry name" value="DNA_ligase_ATP-dep_cent"/>
</dbReference>
<dbReference type="InterPro" id="IPR016059">
    <property type="entry name" value="DNA_ligase_ATP-dep_CS"/>
</dbReference>
<dbReference type="InterPro" id="IPR012308">
    <property type="entry name" value="DNA_ligase_ATP-dep_N"/>
</dbReference>
<dbReference type="InterPro" id="IPR036599">
    <property type="entry name" value="DNA_ligase_N_sf"/>
</dbReference>
<dbReference type="InterPro" id="IPR012340">
    <property type="entry name" value="NA-bd_OB-fold"/>
</dbReference>
<dbReference type="NCBIfam" id="TIGR00574">
    <property type="entry name" value="dnl1"/>
    <property type="match status" value="1"/>
</dbReference>
<dbReference type="PANTHER" id="PTHR45674:SF4">
    <property type="entry name" value="DNA LIGASE 1"/>
    <property type="match status" value="1"/>
</dbReference>
<dbReference type="PANTHER" id="PTHR45674">
    <property type="entry name" value="DNA LIGASE 1/3 FAMILY MEMBER"/>
    <property type="match status" value="1"/>
</dbReference>
<dbReference type="Pfam" id="PF04679">
    <property type="entry name" value="DNA_ligase_A_C"/>
    <property type="match status" value="1"/>
</dbReference>
<dbReference type="Pfam" id="PF01068">
    <property type="entry name" value="DNA_ligase_A_M"/>
    <property type="match status" value="1"/>
</dbReference>
<dbReference type="Pfam" id="PF04675">
    <property type="entry name" value="DNA_ligase_A_N"/>
    <property type="match status" value="1"/>
</dbReference>
<dbReference type="SUPFAM" id="SSF117018">
    <property type="entry name" value="ATP-dependent DNA ligase DNA-binding domain"/>
    <property type="match status" value="1"/>
</dbReference>
<dbReference type="SUPFAM" id="SSF56091">
    <property type="entry name" value="DNA ligase/mRNA capping enzyme, catalytic domain"/>
    <property type="match status" value="1"/>
</dbReference>
<dbReference type="SUPFAM" id="SSF50249">
    <property type="entry name" value="Nucleic acid-binding proteins"/>
    <property type="match status" value="1"/>
</dbReference>
<dbReference type="PROSITE" id="PS00697">
    <property type="entry name" value="DNA_LIGASE_A1"/>
    <property type="match status" value="1"/>
</dbReference>
<dbReference type="PROSITE" id="PS50160">
    <property type="entry name" value="DNA_LIGASE_A3"/>
    <property type="match status" value="1"/>
</dbReference>
<evidence type="ECO:0000255" key="1">
    <source>
        <dbReference type="HAMAP-Rule" id="MF_00407"/>
    </source>
</evidence>
<name>DNLI1_METBF</name>
<proteinExistence type="inferred from homology"/>
<organism>
    <name type="scientific">Methanosarcina barkeri (strain Fusaro / DSM 804)</name>
    <dbReference type="NCBI Taxonomy" id="269797"/>
    <lineage>
        <taxon>Archaea</taxon>
        <taxon>Methanobacteriati</taxon>
        <taxon>Methanobacteriota</taxon>
        <taxon>Stenosarchaea group</taxon>
        <taxon>Methanomicrobia</taxon>
        <taxon>Methanosarcinales</taxon>
        <taxon>Methanosarcinaceae</taxon>
        <taxon>Methanosarcina</taxon>
    </lineage>
</organism>
<keyword id="KW-0067">ATP-binding</keyword>
<keyword id="KW-0131">Cell cycle</keyword>
<keyword id="KW-0132">Cell division</keyword>
<keyword id="KW-0227">DNA damage</keyword>
<keyword id="KW-0233">DNA recombination</keyword>
<keyword id="KW-0234">DNA repair</keyword>
<keyword id="KW-0235">DNA replication</keyword>
<keyword id="KW-0436">Ligase</keyword>
<keyword id="KW-0460">Magnesium</keyword>
<keyword id="KW-0479">Metal-binding</keyword>
<keyword id="KW-0547">Nucleotide-binding</keyword>
<feature type="chain" id="PRO_0000365258" description="DNA ligase 1">
    <location>
        <begin position="1"/>
        <end position="549"/>
    </location>
</feature>
<feature type="active site" description="N6-AMP-lysine intermediate" evidence="1">
    <location>
        <position position="214"/>
    </location>
</feature>
<feature type="binding site" evidence="1">
    <location>
        <position position="212"/>
    </location>
    <ligand>
        <name>ATP</name>
        <dbReference type="ChEBI" id="CHEBI:30616"/>
    </ligand>
</feature>
<feature type="binding site" evidence="1">
    <location>
        <position position="219"/>
    </location>
    <ligand>
        <name>ATP</name>
        <dbReference type="ChEBI" id="CHEBI:30616"/>
    </ligand>
</feature>
<feature type="binding site" evidence="1">
    <location>
        <position position="234"/>
    </location>
    <ligand>
        <name>ATP</name>
        <dbReference type="ChEBI" id="CHEBI:30616"/>
    </ligand>
</feature>
<feature type="binding site" evidence="1">
    <location>
        <position position="264"/>
    </location>
    <ligand>
        <name>ATP</name>
        <dbReference type="ChEBI" id="CHEBI:30616"/>
    </ligand>
</feature>
<feature type="binding site" evidence="1">
    <location>
        <position position="310"/>
    </location>
    <ligand>
        <name>ATP</name>
        <dbReference type="ChEBI" id="CHEBI:30616"/>
    </ligand>
</feature>
<feature type="binding site" evidence="1">
    <location>
        <position position="387"/>
    </location>
    <ligand>
        <name>ATP</name>
        <dbReference type="ChEBI" id="CHEBI:30616"/>
    </ligand>
</feature>
<feature type="binding site" evidence="1">
    <location>
        <position position="393"/>
    </location>
    <ligand>
        <name>ATP</name>
        <dbReference type="ChEBI" id="CHEBI:30616"/>
    </ligand>
</feature>
<sequence length="549" mass="61905">MERKEIKDSAYLFLGSIGPAFENITLGIGDKLALKAIAGAYRVSEEEVKKRYSRTGDLGDVAFELNQGEEKSLAIDEVFGSLKEIKEASGKGSQEEKTGLLSSILQRASPKEGKYIVRIVLGKLRLGFGDQFLLEAFSIAFTGDKKYVVKIKESYSVCTDIGELAESLAEQGPKALGHFSIKLGRPVRSMLAQRVKTFEELEERIPGKKAAEEKYDGERVQIHKNGEEIKAFSRRLEDITAQYPDVIEAVRKGILAKKIVLDGEIIAYVEGGKANDSTGEFYSFQRLMKRRRKYEVQKYTEICPVAVFFFDILYLEGNSLLKKPYPERRAILEEHVKESEILHLARRIVTDNLEEIEDFFNEALEKRLEGIIIKSMGRNSAYEAGKRSWFWLKWKEEYASGMRETFDLAIIGKYYGRGKRKGSFGALLCAILNGEEQRFETFTKVGTGFTEADAKEIDSLLSEHIISEVPKNVLIKSRMLPDIFVEPSLVIEVLGSEITESPSHTAGQGEGDTGLALRFPRFLRIRHDKGPYDITTLTEVRNLKEGKSI</sequence>
<gene>
    <name evidence="1" type="primary">lig1</name>
    <name type="ordered locus">Mbar_A1643</name>
</gene>
<comment type="function">
    <text evidence="1">DNA ligase that seals nicks in double-stranded DNA during DNA replication, DNA recombination and DNA repair.</text>
</comment>
<comment type="catalytic activity">
    <reaction evidence="1">
        <text>ATP + (deoxyribonucleotide)n-3'-hydroxyl + 5'-phospho-(deoxyribonucleotide)m = (deoxyribonucleotide)n+m + AMP + diphosphate.</text>
        <dbReference type="EC" id="6.5.1.1"/>
    </reaction>
</comment>
<comment type="cofactor">
    <cofactor evidence="1">
        <name>Mg(2+)</name>
        <dbReference type="ChEBI" id="CHEBI:18420"/>
    </cofactor>
</comment>
<comment type="similarity">
    <text evidence="1">Belongs to the ATP-dependent DNA ligase family.</text>
</comment>
<reference key="1">
    <citation type="journal article" date="2006" name="J. Bacteriol.">
        <title>The Methanosarcina barkeri genome: comparative analysis with Methanosarcina acetivorans and Methanosarcina mazei reveals extensive rearrangement within methanosarcinal genomes.</title>
        <authorList>
            <person name="Maeder D.L."/>
            <person name="Anderson I."/>
            <person name="Brettin T.S."/>
            <person name="Bruce D.C."/>
            <person name="Gilna P."/>
            <person name="Han C.S."/>
            <person name="Lapidus A."/>
            <person name="Metcalf W.W."/>
            <person name="Saunders E."/>
            <person name="Tapia R."/>
            <person name="Sowers K.R."/>
        </authorList>
    </citation>
    <scope>NUCLEOTIDE SEQUENCE [LARGE SCALE GENOMIC DNA]</scope>
    <source>
        <strain>Fusaro / DSM 804</strain>
    </source>
</reference>